<sequence length="236" mass="27074">MIQLFRVVISEQIIDNSEPVKCKRRTTLGKSLLFSRVLYREWWPATYCSRVSGYRDILPELDLVLWLIKADDRALSVDEYFWRHILQCGHQQVLFVVTQADKTEPCHEWDMAGIQPSPAQAQNIREKTEAVFRLFRPVHPVVAVSARTGWELDTLVSALMTALPDHAASPLMTRLQDELRTESVRSQAREQFTGAVDRIFDTAESVCIASVARTVLRAVRDTVVSVARAVWNWIFF</sequence>
<name>YEEP_ECOLI</name>
<evidence type="ECO:0000305" key="1"/>
<proteinExistence type="uncertain"/>
<organism>
    <name type="scientific">Escherichia coli (strain K12)</name>
    <dbReference type="NCBI Taxonomy" id="83333"/>
    <lineage>
        <taxon>Bacteria</taxon>
        <taxon>Pseudomonadati</taxon>
        <taxon>Pseudomonadota</taxon>
        <taxon>Gammaproteobacteria</taxon>
        <taxon>Enterobacterales</taxon>
        <taxon>Enterobacteriaceae</taxon>
        <taxon>Escherichia</taxon>
    </lineage>
</organism>
<feature type="chain" id="PRO_0000169110" description="Putative uncharacterized protein YeeP">
    <location>
        <begin position="1"/>
        <end position="236"/>
    </location>
</feature>
<comment type="similarity">
    <text evidence="1">To E.coli YfjP and YkfA.</text>
</comment>
<comment type="caution">
    <text evidence="1">Could be the product of a pseudogene.</text>
</comment>
<protein>
    <recommendedName>
        <fullName>Putative uncharacterized protein YeeP</fullName>
    </recommendedName>
</protein>
<gene>
    <name type="primary">yeeP</name>
    <name type="ordered locus">b1999</name>
    <name type="ordered locus">JW5327</name>
</gene>
<accession>P76359</accession>
<accession>P94754</accession>
<keyword id="KW-1185">Reference proteome</keyword>
<reference key="1">
    <citation type="journal article" date="1996" name="DNA Res.">
        <title>A 460-kb DNA sequence of the Escherichia coli K-12 genome corresponding to the 40.1-50.0 min region on the linkage map.</title>
        <authorList>
            <person name="Itoh T."/>
            <person name="Aiba H."/>
            <person name="Baba T."/>
            <person name="Fujita K."/>
            <person name="Hayashi K."/>
            <person name="Inada T."/>
            <person name="Isono K."/>
            <person name="Kasai H."/>
            <person name="Kimura S."/>
            <person name="Kitakawa M."/>
            <person name="Kitagawa M."/>
            <person name="Makino K."/>
            <person name="Miki T."/>
            <person name="Mizobuchi K."/>
            <person name="Mori H."/>
            <person name="Mori T."/>
            <person name="Motomura K."/>
            <person name="Nakade S."/>
            <person name="Nakamura Y."/>
            <person name="Nashimoto H."/>
            <person name="Nishio Y."/>
            <person name="Oshima T."/>
            <person name="Saito N."/>
            <person name="Sampei G."/>
            <person name="Seki Y."/>
            <person name="Sivasundaram S."/>
            <person name="Tagami H."/>
            <person name="Takeda J."/>
            <person name="Takemoto K."/>
            <person name="Wada C."/>
            <person name="Yamamoto Y."/>
            <person name="Horiuchi T."/>
        </authorList>
    </citation>
    <scope>NUCLEOTIDE SEQUENCE [LARGE SCALE GENOMIC DNA]</scope>
    <source>
        <strain>K12 / W3110 / ATCC 27325 / DSM 5911</strain>
    </source>
</reference>
<reference key="2">
    <citation type="journal article" date="1997" name="Science">
        <title>The complete genome sequence of Escherichia coli K-12.</title>
        <authorList>
            <person name="Blattner F.R."/>
            <person name="Plunkett G. III"/>
            <person name="Bloch C.A."/>
            <person name="Perna N.T."/>
            <person name="Burland V."/>
            <person name="Riley M."/>
            <person name="Collado-Vides J."/>
            <person name="Glasner J.D."/>
            <person name="Rode C.K."/>
            <person name="Mayhew G.F."/>
            <person name="Gregor J."/>
            <person name="Davis N.W."/>
            <person name="Kirkpatrick H.A."/>
            <person name="Goeden M.A."/>
            <person name="Rose D.J."/>
            <person name="Mau B."/>
            <person name="Shao Y."/>
        </authorList>
    </citation>
    <scope>NUCLEOTIDE SEQUENCE [LARGE SCALE GENOMIC DNA]</scope>
    <source>
        <strain>K12 / MG1655 / ATCC 47076</strain>
    </source>
</reference>
<reference key="3">
    <citation type="journal article" date="2006" name="Mol. Syst. Biol.">
        <title>Highly accurate genome sequences of Escherichia coli K-12 strains MG1655 and W3110.</title>
        <authorList>
            <person name="Hayashi K."/>
            <person name="Morooka N."/>
            <person name="Yamamoto Y."/>
            <person name="Fujita K."/>
            <person name="Isono K."/>
            <person name="Choi S."/>
            <person name="Ohtsubo E."/>
            <person name="Baba T."/>
            <person name="Wanner B.L."/>
            <person name="Mori H."/>
            <person name="Horiuchi T."/>
        </authorList>
    </citation>
    <scope>NUCLEOTIDE SEQUENCE [LARGE SCALE GENOMIC DNA]</scope>
    <source>
        <strain>K12 / W3110 / ATCC 27325 / DSM 5911</strain>
    </source>
</reference>
<dbReference type="EMBL" id="U00096">
    <property type="status" value="NOT_ANNOTATED_CDS"/>
    <property type="molecule type" value="Genomic_DNA"/>
</dbReference>
<dbReference type="EMBL" id="AP009048">
    <property type="status" value="NOT_ANNOTATED_CDS"/>
    <property type="molecule type" value="Genomic_DNA"/>
</dbReference>
<dbReference type="PIR" id="F64964">
    <property type="entry name" value="F64964"/>
</dbReference>
<dbReference type="FunCoup" id="P76359">
    <property type="interactions" value="28"/>
</dbReference>
<dbReference type="KEGG" id="ecoc:C3026_11275"/>
<dbReference type="PATRIC" id="fig|83333.103.peg.2857"/>
<dbReference type="EchoBASE" id="EB3165"/>
<dbReference type="InParanoid" id="P76359"/>
<dbReference type="OrthoDB" id="9779790at2"/>
<dbReference type="PhylomeDB" id="P76359"/>
<dbReference type="Proteomes" id="UP000000625">
    <property type="component" value="Chromosome"/>
</dbReference>
<dbReference type="GO" id="GO:0005737">
    <property type="term" value="C:cytoplasm"/>
    <property type="evidence" value="ECO:0000318"/>
    <property type="project" value="GO_Central"/>
</dbReference>
<dbReference type="GO" id="GO:0005829">
    <property type="term" value="C:cytosol"/>
    <property type="evidence" value="ECO:0000318"/>
    <property type="project" value="GO_Central"/>
</dbReference>
<dbReference type="GO" id="GO:0030488">
    <property type="term" value="P:tRNA methylation"/>
    <property type="evidence" value="ECO:0000318"/>
    <property type="project" value="GO_Central"/>
</dbReference>
<dbReference type="GO" id="GO:0002098">
    <property type="term" value="P:tRNA wobble uridine modification"/>
    <property type="evidence" value="ECO:0000318"/>
    <property type="project" value="GO_Central"/>
</dbReference>
<dbReference type="Gene3D" id="3.40.50.300">
    <property type="entry name" value="P-loop containing nucleotide triphosphate hydrolases"/>
    <property type="match status" value="1"/>
</dbReference>
<dbReference type="InterPro" id="IPR027417">
    <property type="entry name" value="P-loop_NTPase"/>
</dbReference>
<dbReference type="SUPFAM" id="SSF52540">
    <property type="entry name" value="P-loop containing nucleoside triphosphate hydrolases"/>
    <property type="match status" value="1"/>
</dbReference>